<feature type="chain" id="PRO_0000093071" description="UvrABC system protein A">
    <location>
        <begin position="1"/>
        <end position="950"/>
    </location>
</feature>
<feature type="domain" description="ABC transporter 1" evidence="1">
    <location>
        <begin position="319"/>
        <end position="596"/>
    </location>
</feature>
<feature type="domain" description="ABC transporter 2" evidence="1">
    <location>
        <begin position="616"/>
        <end position="945"/>
    </location>
</feature>
<feature type="zinc finger region" description="C4-type" evidence="1">
    <location>
        <begin position="262"/>
        <end position="289"/>
    </location>
</feature>
<feature type="zinc finger region" description="C4-type" evidence="1">
    <location>
        <begin position="748"/>
        <end position="774"/>
    </location>
</feature>
<feature type="binding site" evidence="1">
    <location>
        <begin position="42"/>
        <end position="49"/>
    </location>
    <ligand>
        <name>ATP</name>
        <dbReference type="ChEBI" id="CHEBI:30616"/>
    </ligand>
</feature>
<feature type="binding site" evidence="1">
    <location>
        <begin position="649"/>
        <end position="656"/>
    </location>
    <ligand>
        <name>ATP</name>
        <dbReference type="ChEBI" id="CHEBI:30616"/>
    </ligand>
</feature>
<keyword id="KW-0067">ATP-binding</keyword>
<keyword id="KW-0963">Cytoplasm</keyword>
<keyword id="KW-0227">DNA damage</keyword>
<keyword id="KW-0228">DNA excision</keyword>
<keyword id="KW-0234">DNA repair</keyword>
<keyword id="KW-0238">DNA-binding</keyword>
<keyword id="KW-0267">Excision nuclease</keyword>
<keyword id="KW-0479">Metal-binding</keyword>
<keyword id="KW-0547">Nucleotide-binding</keyword>
<keyword id="KW-0677">Repeat</keyword>
<keyword id="KW-0742">SOS response</keyword>
<keyword id="KW-0862">Zinc</keyword>
<keyword id="KW-0863">Zinc-finger</keyword>
<reference key="1">
    <citation type="journal article" date="1997" name="Mol. Gen. Genet.">
        <title>Cloning, nucleotide sequence and transcriptional analysis of the uvrA gene from Neisseria gonorrhoeae.</title>
        <authorList>
            <person name="Black C.G."/>
            <person name="Fyfe J.A.M."/>
            <person name="Davies J.K."/>
        </authorList>
    </citation>
    <scope>NUCLEOTIDE SEQUENCE [GENOMIC DNA]</scope>
</reference>
<accession>Q50968</accession>
<organism>
    <name type="scientific">Neisseria gonorrhoeae</name>
    <dbReference type="NCBI Taxonomy" id="485"/>
    <lineage>
        <taxon>Bacteria</taxon>
        <taxon>Pseudomonadati</taxon>
        <taxon>Pseudomonadota</taxon>
        <taxon>Betaproteobacteria</taxon>
        <taxon>Neisseriales</taxon>
        <taxon>Neisseriaceae</taxon>
        <taxon>Neisseria</taxon>
    </lineage>
</organism>
<comment type="function">
    <text evidence="1">The UvrABC repair system catalyzes the recognition and processing of DNA lesions. UvrA is an ATPase and a DNA-binding protein. A damage recognition complex composed of 2 UvrA and 2 UvrB subunits scans DNA for abnormalities. When the presence of a lesion has been verified by UvrB, the UvrA molecules dissociate.</text>
</comment>
<comment type="subunit">
    <text evidence="1">Forms a heterotetramer with UvrB during the search for lesions.</text>
</comment>
<comment type="subcellular location">
    <subcellularLocation>
        <location evidence="1">Cytoplasm</location>
    </subcellularLocation>
</comment>
<comment type="similarity">
    <text evidence="1">Belongs to the ABC transporter superfamily. UvrA family.</text>
</comment>
<name>UVRA_NEIGO</name>
<sequence>MCNHHPRHSHDNDTIRIRGARTHNLKNIDLDIPRHKLVVVTGLSGSGKSSLAFDTLYAEGQRRYVESLSAYARQFLQMMDKPDVDLIEGLSPAISIEQKSTSHNPRSTVGTVTEIHDYLRLLYARVGTPYCPEHNLSLSSQTVSQMVDAVLKLPEDTRVMILGPAVRERKGEFVDFFADLQAQGFARVRVDGEVYQLDEVPKLEKNIKHNIDVVIDRVKVKADIKQRLAESFETALRHGNERALAMEMDSGEEHWFSARFACPVCSYSLPELEPRLFSFNNPMGSCPTCDGLGNTNFFDPEKVVAHPELSLATGAIDGWDKRNQFYFQMIQSLAHHYKFDVNVAWETLPEKVKKVVLHGSGKEVIDFTYLSERGTTFNRSHAFEGIIPNLERRYRETDSETVREKLREYQNHRACPSCGGARLRKEARYVYVGGEPLHEVSAWPLTKTHRFFETLDLDGNKKQIAEKILKEITERLGFLINVGLDYLNLSRSAETLSGGEAQRIRLASQIGSGLTGVMYVLDEPSIGLHQRDNDRLLATLKRLRDLGNSVIVVEHDEDAIREADFVVDMGPGAGEHGGNVLIADTPENVAKCEKSVTGQYLGGKKSIAVPSERTPVNPGRMLVLKGARGNNLKNVTLELPLGLITCITGVSGSGKSTLINDTLAKITARELNRAQEEPAPYDDIRGLEHLDKVINVDQSPIGRTPRSNPATYTGLFTPIRELFAGVPLSRERGYNVGRFSFNVKGGRCEACQGDGVIKVEMHFLPDVYVPCEVCHGKRYNRETLEIQYKGKNISQVLDMTVEEAREFFDAVPTVSRKLQTLMDVGLGYIRLGQSATTLSGGEAQRVKLALELSKRDTGRTLYILDEPTTGLHFADIALLLEVIGRLKGKGNSIVIIEHNLDVIKTADWIVDLGPEGGDGGGKVIAKGSPEQVAKIKGSYTGKYLKVALNK</sequence>
<gene>
    <name evidence="1" type="primary">uvrA</name>
</gene>
<protein>
    <recommendedName>
        <fullName evidence="1">UvrABC system protein A</fullName>
        <shortName evidence="1">UvrA protein</shortName>
    </recommendedName>
    <alternativeName>
        <fullName evidence="1">Excinuclease ABC subunit A</fullName>
    </alternativeName>
</protein>
<dbReference type="EMBL" id="U34760">
    <property type="protein sequence ID" value="AAA84885.1"/>
    <property type="molecule type" value="Genomic_DNA"/>
</dbReference>
<dbReference type="SMR" id="Q50968"/>
<dbReference type="PATRIC" id="fig|485.41.peg.2376"/>
<dbReference type="GO" id="GO:0005737">
    <property type="term" value="C:cytoplasm"/>
    <property type="evidence" value="ECO:0007669"/>
    <property type="project" value="UniProtKB-SubCell"/>
</dbReference>
<dbReference type="GO" id="GO:0009380">
    <property type="term" value="C:excinuclease repair complex"/>
    <property type="evidence" value="ECO:0007669"/>
    <property type="project" value="InterPro"/>
</dbReference>
<dbReference type="GO" id="GO:0005524">
    <property type="term" value="F:ATP binding"/>
    <property type="evidence" value="ECO:0007669"/>
    <property type="project" value="UniProtKB-UniRule"/>
</dbReference>
<dbReference type="GO" id="GO:0016887">
    <property type="term" value="F:ATP hydrolysis activity"/>
    <property type="evidence" value="ECO:0007669"/>
    <property type="project" value="InterPro"/>
</dbReference>
<dbReference type="GO" id="GO:0003677">
    <property type="term" value="F:DNA binding"/>
    <property type="evidence" value="ECO:0007669"/>
    <property type="project" value="UniProtKB-UniRule"/>
</dbReference>
<dbReference type="GO" id="GO:0009381">
    <property type="term" value="F:excinuclease ABC activity"/>
    <property type="evidence" value="ECO:0007669"/>
    <property type="project" value="UniProtKB-UniRule"/>
</dbReference>
<dbReference type="GO" id="GO:0008270">
    <property type="term" value="F:zinc ion binding"/>
    <property type="evidence" value="ECO:0007669"/>
    <property type="project" value="UniProtKB-UniRule"/>
</dbReference>
<dbReference type="GO" id="GO:0006289">
    <property type="term" value="P:nucleotide-excision repair"/>
    <property type="evidence" value="ECO:0007669"/>
    <property type="project" value="UniProtKB-UniRule"/>
</dbReference>
<dbReference type="GO" id="GO:0009432">
    <property type="term" value="P:SOS response"/>
    <property type="evidence" value="ECO:0007669"/>
    <property type="project" value="UniProtKB-UniRule"/>
</dbReference>
<dbReference type="CDD" id="cd03270">
    <property type="entry name" value="ABC_UvrA_I"/>
    <property type="match status" value="1"/>
</dbReference>
<dbReference type="CDD" id="cd03271">
    <property type="entry name" value="ABC_UvrA_II"/>
    <property type="match status" value="1"/>
</dbReference>
<dbReference type="FunFam" id="1.10.8.280:FF:000001">
    <property type="entry name" value="UvrABC system protein A"/>
    <property type="match status" value="1"/>
</dbReference>
<dbReference type="FunFam" id="1.20.1580.10:FF:000002">
    <property type="entry name" value="UvrABC system protein A"/>
    <property type="match status" value="1"/>
</dbReference>
<dbReference type="FunFam" id="3.30.190.20:FF:000003">
    <property type="entry name" value="UvrABC system protein A"/>
    <property type="match status" value="1"/>
</dbReference>
<dbReference type="FunFam" id="3.40.50.300:FF:000028">
    <property type="entry name" value="UvrABC system protein A"/>
    <property type="match status" value="1"/>
</dbReference>
<dbReference type="Gene3D" id="1.10.8.280">
    <property type="entry name" value="ABC transporter ATPase domain-like"/>
    <property type="match status" value="1"/>
</dbReference>
<dbReference type="Gene3D" id="1.20.1580.10">
    <property type="entry name" value="ABC transporter ATPase like domain"/>
    <property type="match status" value="2"/>
</dbReference>
<dbReference type="Gene3D" id="3.30.1490.20">
    <property type="entry name" value="ATP-grasp fold, A domain"/>
    <property type="match status" value="1"/>
</dbReference>
<dbReference type="Gene3D" id="3.40.50.300">
    <property type="entry name" value="P-loop containing nucleotide triphosphate hydrolases"/>
    <property type="match status" value="2"/>
</dbReference>
<dbReference type="HAMAP" id="MF_00205">
    <property type="entry name" value="UvrA"/>
    <property type="match status" value="1"/>
</dbReference>
<dbReference type="InterPro" id="IPR003439">
    <property type="entry name" value="ABC_transporter-like_ATP-bd"/>
</dbReference>
<dbReference type="InterPro" id="IPR017871">
    <property type="entry name" value="ABC_transporter-like_CS"/>
</dbReference>
<dbReference type="InterPro" id="IPR013815">
    <property type="entry name" value="ATP_grasp_subdomain_1"/>
</dbReference>
<dbReference type="InterPro" id="IPR027417">
    <property type="entry name" value="P-loop_NTPase"/>
</dbReference>
<dbReference type="InterPro" id="IPR004602">
    <property type="entry name" value="UvrA"/>
</dbReference>
<dbReference type="InterPro" id="IPR041552">
    <property type="entry name" value="UvrA_DNA-bd"/>
</dbReference>
<dbReference type="InterPro" id="IPR041102">
    <property type="entry name" value="UvrA_inter"/>
</dbReference>
<dbReference type="NCBIfam" id="NF001503">
    <property type="entry name" value="PRK00349.1"/>
    <property type="match status" value="1"/>
</dbReference>
<dbReference type="NCBIfam" id="TIGR00630">
    <property type="entry name" value="uvra"/>
    <property type="match status" value="1"/>
</dbReference>
<dbReference type="PANTHER" id="PTHR43152">
    <property type="entry name" value="UVRABC SYSTEM PROTEIN A"/>
    <property type="match status" value="1"/>
</dbReference>
<dbReference type="PANTHER" id="PTHR43152:SF3">
    <property type="entry name" value="UVRABC SYSTEM PROTEIN A"/>
    <property type="match status" value="1"/>
</dbReference>
<dbReference type="Pfam" id="PF17755">
    <property type="entry name" value="UvrA_DNA-bind"/>
    <property type="match status" value="1"/>
</dbReference>
<dbReference type="Pfam" id="PF17760">
    <property type="entry name" value="UvrA_inter"/>
    <property type="match status" value="1"/>
</dbReference>
<dbReference type="SUPFAM" id="SSF52540">
    <property type="entry name" value="P-loop containing nucleoside triphosphate hydrolases"/>
    <property type="match status" value="2"/>
</dbReference>
<dbReference type="PROSITE" id="PS00211">
    <property type="entry name" value="ABC_TRANSPORTER_1"/>
    <property type="match status" value="2"/>
</dbReference>
<dbReference type="PROSITE" id="PS50893">
    <property type="entry name" value="ABC_TRANSPORTER_2"/>
    <property type="match status" value="1"/>
</dbReference>
<proteinExistence type="inferred from homology"/>
<evidence type="ECO:0000255" key="1">
    <source>
        <dbReference type="HAMAP-Rule" id="MF_00205"/>
    </source>
</evidence>